<accession>Q8P4H2</accession>
<proteinExistence type="inferred from homology"/>
<protein>
    <recommendedName>
        <fullName evidence="1">RNA polymerase sigma factor RpoD</fullName>
    </recommendedName>
    <alternativeName>
        <fullName evidence="1">Sigma-70</fullName>
    </alternativeName>
</protein>
<evidence type="ECO:0000255" key="1">
    <source>
        <dbReference type="HAMAP-Rule" id="MF_00963"/>
    </source>
</evidence>
<evidence type="ECO:0000256" key="2">
    <source>
        <dbReference type="SAM" id="MobiDB-lite"/>
    </source>
</evidence>
<sequence length="624" mass="69947">MANERPAQQSDIKLLISKGLEQGYLTYAEVNDHLPDDLVDPEQIEDIISMINGMGIDVHEVAPDAETLLLNDGNTGNREVDDTAAEEAAAALTALDTEGGRTTDPVRMYMREMGTVELLTREGEIAIAKRIEEGLSQVQAALGTFPLSTELLLSDYEAHKEGKKRLAEIVVGFNDLIEEADAAAAALAAAGPVAVDEDAVDEDADEDGDDDAAEEEAGPTGPDPVEVATRMENLANEYAKFKKAYVKYGAEHKNVAKAREDMAAIFTTLKLPLPLTDALVTQLRGVVNGIKDHERKVLHLATTVARMPRKDFIRSWEGNQTNLEWVEDALKRKQKWSSALRDVKDQIVSEQQGSIEMEKANYLTLAEIKDISRAMAYGEAKARKAKKEMVEANLRLVISIAKKYTNRGLQFLDLIQEGNIGLMKAVDKFEYRRGYKFSTYATWWIRQAITRSIADQARTIRIPVHMIETINKLNRISRQMLQQFGREATPEELAKEMDMPEDKIRKVMKIAKEPISMETPIGDDEDSHLGDFIEDTNVESPIDNTTNINLSETVRDVLAGLTPREAKVLRMRFGIDMNTDHTLEEVGKQFDVTRERIRQIEAKALRKLRHPSRSEQLRSFLDID</sequence>
<reference key="1">
    <citation type="journal article" date="2002" name="Nature">
        <title>Comparison of the genomes of two Xanthomonas pathogens with differing host specificities.</title>
        <authorList>
            <person name="da Silva A.C.R."/>
            <person name="Ferro J.A."/>
            <person name="Reinach F.C."/>
            <person name="Farah C.S."/>
            <person name="Furlan L.R."/>
            <person name="Quaggio R.B."/>
            <person name="Monteiro-Vitorello C.B."/>
            <person name="Van Sluys M.A."/>
            <person name="Almeida N.F. Jr."/>
            <person name="Alves L.M.C."/>
            <person name="do Amaral A.M."/>
            <person name="Bertolini M.C."/>
            <person name="Camargo L.E.A."/>
            <person name="Camarotte G."/>
            <person name="Cannavan F."/>
            <person name="Cardozo J."/>
            <person name="Chambergo F."/>
            <person name="Ciapina L.P."/>
            <person name="Cicarelli R.M.B."/>
            <person name="Coutinho L.L."/>
            <person name="Cursino-Santos J.R."/>
            <person name="El-Dorry H."/>
            <person name="Faria J.B."/>
            <person name="Ferreira A.J.S."/>
            <person name="Ferreira R.C.C."/>
            <person name="Ferro M.I.T."/>
            <person name="Formighieri E.F."/>
            <person name="Franco M.C."/>
            <person name="Greggio C.C."/>
            <person name="Gruber A."/>
            <person name="Katsuyama A.M."/>
            <person name="Kishi L.T."/>
            <person name="Leite R.P."/>
            <person name="Lemos E.G.M."/>
            <person name="Lemos M.V.F."/>
            <person name="Locali E.C."/>
            <person name="Machado M.A."/>
            <person name="Madeira A.M.B.N."/>
            <person name="Martinez-Rossi N.M."/>
            <person name="Martins E.C."/>
            <person name="Meidanis J."/>
            <person name="Menck C.F.M."/>
            <person name="Miyaki C.Y."/>
            <person name="Moon D.H."/>
            <person name="Moreira L.M."/>
            <person name="Novo M.T.M."/>
            <person name="Okura V.K."/>
            <person name="Oliveira M.C."/>
            <person name="Oliveira V.R."/>
            <person name="Pereira H.A."/>
            <person name="Rossi A."/>
            <person name="Sena J.A.D."/>
            <person name="Silva C."/>
            <person name="de Souza R.F."/>
            <person name="Spinola L.A.F."/>
            <person name="Takita M.A."/>
            <person name="Tamura R.E."/>
            <person name="Teixeira E.C."/>
            <person name="Tezza R.I.D."/>
            <person name="Trindade dos Santos M."/>
            <person name="Truffi D."/>
            <person name="Tsai S.M."/>
            <person name="White F.F."/>
            <person name="Setubal J.C."/>
            <person name="Kitajima J.P."/>
        </authorList>
    </citation>
    <scope>NUCLEOTIDE SEQUENCE [LARGE SCALE GENOMIC DNA]</scope>
    <source>
        <strain>ATCC 33913 / DSM 3586 / NCPPB 528 / LMG 568 / P 25</strain>
    </source>
</reference>
<name>RPOD_XANCP</name>
<feature type="chain" id="PRO_0000093932" description="RNA polymerase sigma factor RpoD">
    <location>
        <begin position="1"/>
        <end position="624"/>
    </location>
</feature>
<feature type="DNA-binding region" description="H-T-H motif" evidence="1">
    <location>
        <begin position="583"/>
        <end position="602"/>
    </location>
</feature>
<feature type="region of interest" description="Disordered" evidence="2">
    <location>
        <begin position="197"/>
        <end position="224"/>
    </location>
</feature>
<feature type="region of interest" description="Sigma-70 factor domain-2" evidence="1">
    <location>
        <begin position="389"/>
        <end position="459"/>
    </location>
</feature>
<feature type="region of interest" description="Sigma-70 factor domain-3" evidence="1">
    <location>
        <begin position="468"/>
        <end position="544"/>
    </location>
</feature>
<feature type="region of interest" description="Sigma-70 factor domain-4" evidence="1">
    <location>
        <begin position="557"/>
        <end position="610"/>
    </location>
</feature>
<feature type="short sequence motif" description="Interaction with polymerase core subunit RpoC">
    <location>
        <begin position="413"/>
        <end position="416"/>
    </location>
</feature>
<feature type="compositionally biased region" description="Acidic residues" evidence="2">
    <location>
        <begin position="197"/>
        <end position="217"/>
    </location>
</feature>
<gene>
    <name evidence="1" type="primary">rpoD</name>
    <name type="ordered locus">XCC3736</name>
</gene>
<comment type="function">
    <text evidence="1">Sigma factors are initiation factors that promote the attachment of RNA polymerase to specific initiation sites and are then released. This sigma factor is the primary sigma factor during exponential growth.</text>
</comment>
<comment type="subunit">
    <text evidence="1">Interacts transiently with the RNA polymerase catalytic core.</text>
</comment>
<comment type="subcellular location">
    <subcellularLocation>
        <location evidence="1">Cytoplasm</location>
    </subcellularLocation>
</comment>
<comment type="similarity">
    <text evidence="1">Belongs to the sigma-70 factor family. RpoD/SigA subfamily.</text>
</comment>
<organism>
    <name type="scientific">Xanthomonas campestris pv. campestris (strain ATCC 33913 / DSM 3586 / NCPPB 528 / LMG 568 / P 25)</name>
    <dbReference type="NCBI Taxonomy" id="190485"/>
    <lineage>
        <taxon>Bacteria</taxon>
        <taxon>Pseudomonadati</taxon>
        <taxon>Pseudomonadota</taxon>
        <taxon>Gammaproteobacteria</taxon>
        <taxon>Lysobacterales</taxon>
        <taxon>Lysobacteraceae</taxon>
        <taxon>Xanthomonas</taxon>
    </lineage>
</organism>
<keyword id="KW-0963">Cytoplasm</keyword>
<keyword id="KW-0238">DNA-binding</keyword>
<keyword id="KW-1185">Reference proteome</keyword>
<keyword id="KW-0731">Sigma factor</keyword>
<keyword id="KW-0804">Transcription</keyword>
<keyword id="KW-0805">Transcription regulation</keyword>
<dbReference type="EMBL" id="AE008922">
    <property type="protein sequence ID" value="AAM42993.1"/>
    <property type="molecule type" value="Genomic_DNA"/>
</dbReference>
<dbReference type="RefSeq" id="NP_639081.1">
    <property type="nucleotide sequence ID" value="NC_003902.1"/>
</dbReference>
<dbReference type="RefSeq" id="WP_011038818.1">
    <property type="nucleotide sequence ID" value="NC_003902.1"/>
</dbReference>
<dbReference type="SMR" id="Q8P4H2"/>
<dbReference type="STRING" id="190485.XCC3736"/>
<dbReference type="EnsemblBacteria" id="AAM42993">
    <property type="protein sequence ID" value="AAM42993"/>
    <property type="gene ID" value="XCC3736"/>
</dbReference>
<dbReference type="KEGG" id="xcc:XCC3736"/>
<dbReference type="PATRIC" id="fig|190485.4.peg.3997"/>
<dbReference type="eggNOG" id="COG0568">
    <property type="taxonomic scope" value="Bacteria"/>
</dbReference>
<dbReference type="HOGENOM" id="CLU_014793_7_2_6"/>
<dbReference type="OrthoDB" id="9809557at2"/>
<dbReference type="Proteomes" id="UP000001010">
    <property type="component" value="Chromosome"/>
</dbReference>
<dbReference type="GO" id="GO:0005737">
    <property type="term" value="C:cytoplasm"/>
    <property type="evidence" value="ECO:0007669"/>
    <property type="project" value="UniProtKB-SubCell"/>
</dbReference>
<dbReference type="GO" id="GO:0003677">
    <property type="term" value="F:DNA binding"/>
    <property type="evidence" value="ECO:0007669"/>
    <property type="project" value="UniProtKB-UniRule"/>
</dbReference>
<dbReference type="GO" id="GO:0016987">
    <property type="term" value="F:sigma factor activity"/>
    <property type="evidence" value="ECO:0007669"/>
    <property type="project" value="UniProtKB-UniRule"/>
</dbReference>
<dbReference type="GO" id="GO:0006352">
    <property type="term" value="P:DNA-templated transcription initiation"/>
    <property type="evidence" value="ECO:0007669"/>
    <property type="project" value="UniProtKB-UniRule"/>
</dbReference>
<dbReference type="CDD" id="cd06171">
    <property type="entry name" value="Sigma70_r4"/>
    <property type="match status" value="1"/>
</dbReference>
<dbReference type="FunFam" id="1.10.220.120:FF:000001">
    <property type="entry name" value="RNA polymerase sigma factor RpoD"/>
    <property type="match status" value="1"/>
</dbReference>
<dbReference type="FunFam" id="1.10.601.10:FF:000002">
    <property type="entry name" value="RNA polymerase sigma factor RpoD"/>
    <property type="match status" value="1"/>
</dbReference>
<dbReference type="FunFam" id="1.10.10.10:FF:000002">
    <property type="entry name" value="RNA polymerase sigma factor SigA"/>
    <property type="match status" value="1"/>
</dbReference>
<dbReference type="FunFam" id="1.10.10.10:FF:000004">
    <property type="entry name" value="RNA polymerase sigma factor SigA"/>
    <property type="match status" value="1"/>
</dbReference>
<dbReference type="Gene3D" id="1.10.601.10">
    <property type="entry name" value="RNA Polymerase Primary Sigma Factor"/>
    <property type="match status" value="1"/>
</dbReference>
<dbReference type="Gene3D" id="1.10.220.120">
    <property type="entry name" value="Sigma-70 factor, region 1.1"/>
    <property type="match status" value="1"/>
</dbReference>
<dbReference type="Gene3D" id="1.10.10.10">
    <property type="entry name" value="Winged helix-like DNA-binding domain superfamily/Winged helix DNA-binding domain"/>
    <property type="match status" value="2"/>
</dbReference>
<dbReference type="HAMAP" id="MF_00963">
    <property type="entry name" value="Sigma70_RpoD_SigA"/>
    <property type="match status" value="1"/>
</dbReference>
<dbReference type="InterPro" id="IPR014284">
    <property type="entry name" value="RNA_pol_sigma-70_dom"/>
</dbReference>
<dbReference type="InterPro" id="IPR000943">
    <property type="entry name" value="RNA_pol_sigma70"/>
</dbReference>
<dbReference type="InterPro" id="IPR009042">
    <property type="entry name" value="RNA_pol_sigma70_r1_2"/>
</dbReference>
<dbReference type="InterPro" id="IPR007627">
    <property type="entry name" value="RNA_pol_sigma70_r2"/>
</dbReference>
<dbReference type="InterPro" id="IPR007624">
    <property type="entry name" value="RNA_pol_sigma70_r3"/>
</dbReference>
<dbReference type="InterPro" id="IPR007630">
    <property type="entry name" value="RNA_pol_sigma70_r4"/>
</dbReference>
<dbReference type="InterPro" id="IPR007631">
    <property type="entry name" value="RNA_pol_sigma_70_non-ess"/>
</dbReference>
<dbReference type="InterPro" id="IPR007127">
    <property type="entry name" value="RNA_pol_sigma_70_r1_1"/>
</dbReference>
<dbReference type="InterPro" id="IPR042189">
    <property type="entry name" value="RNA_pol_sigma_70_r1_1_sf"/>
</dbReference>
<dbReference type="InterPro" id="IPR013325">
    <property type="entry name" value="RNA_pol_sigma_r2"/>
</dbReference>
<dbReference type="InterPro" id="IPR013324">
    <property type="entry name" value="RNA_pol_sigma_r3/r4-like"/>
</dbReference>
<dbReference type="InterPro" id="IPR012760">
    <property type="entry name" value="RNA_pol_sigma_RpoD_C"/>
</dbReference>
<dbReference type="InterPro" id="IPR050239">
    <property type="entry name" value="Sigma-70_RNA_pol_init_factors"/>
</dbReference>
<dbReference type="InterPro" id="IPR028630">
    <property type="entry name" value="Sigma70_RpoD"/>
</dbReference>
<dbReference type="InterPro" id="IPR036388">
    <property type="entry name" value="WH-like_DNA-bd_sf"/>
</dbReference>
<dbReference type="NCBIfam" id="NF004208">
    <property type="entry name" value="PRK05658.1"/>
    <property type="match status" value="1"/>
</dbReference>
<dbReference type="NCBIfam" id="TIGR02393">
    <property type="entry name" value="RpoD_Cterm"/>
    <property type="match status" value="1"/>
</dbReference>
<dbReference type="NCBIfam" id="TIGR02937">
    <property type="entry name" value="sigma70-ECF"/>
    <property type="match status" value="1"/>
</dbReference>
<dbReference type="PANTHER" id="PTHR30603">
    <property type="entry name" value="RNA POLYMERASE SIGMA FACTOR RPO"/>
    <property type="match status" value="1"/>
</dbReference>
<dbReference type="PANTHER" id="PTHR30603:SF60">
    <property type="entry name" value="RNA POLYMERASE SIGMA FACTOR RPOD"/>
    <property type="match status" value="1"/>
</dbReference>
<dbReference type="Pfam" id="PF04546">
    <property type="entry name" value="Sigma70_ner"/>
    <property type="match status" value="1"/>
</dbReference>
<dbReference type="Pfam" id="PF03979">
    <property type="entry name" value="Sigma70_r1_1"/>
    <property type="match status" value="1"/>
</dbReference>
<dbReference type="Pfam" id="PF00140">
    <property type="entry name" value="Sigma70_r1_2"/>
    <property type="match status" value="1"/>
</dbReference>
<dbReference type="Pfam" id="PF04542">
    <property type="entry name" value="Sigma70_r2"/>
    <property type="match status" value="1"/>
</dbReference>
<dbReference type="Pfam" id="PF04539">
    <property type="entry name" value="Sigma70_r3"/>
    <property type="match status" value="1"/>
</dbReference>
<dbReference type="Pfam" id="PF04545">
    <property type="entry name" value="Sigma70_r4"/>
    <property type="match status" value="1"/>
</dbReference>
<dbReference type="PRINTS" id="PR00046">
    <property type="entry name" value="SIGMA70FCT"/>
</dbReference>
<dbReference type="SUPFAM" id="SSF88946">
    <property type="entry name" value="Sigma2 domain of RNA polymerase sigma factors"/>
    <property type="match status" value="1"/>
</dbReference>
<dbReference type="SUPFAM" id="SSF88659">
    <property type="entry name" value="Sigma3 and sigma4 domains of RNA polymerase sigma factors"/>
    <property type="match status" value="2"/>
</dbReference>
<dbReference type="PROSITE" id="PS00715">
    <property type="entry name" value="SIGMA70_1"/>
    <property type="match status" value="1"/>
</dbReference>
<dbReference type="PROSITE" id="PS00716">
    <property type="entry name" value="SIGMA70_2"/>
    <property type="match status" value="1"/>
</dbReference>